<evidence type="ECO:0000255" key="1">
    <source>
        <dbReference type="HAMAP-Rule" id="MF_01394"/>
    </source>
</evidence>
<protein>
    <recommendedName>
        <fullName evidence="1">NADH-quinone oxidoreductase subunit A</fullName>
        <ecNumber evidence="1">7.1.1.-</ecNumber>
    </recommendedName>
    <alternativeName>
        <fullName evidence="1">NADH dehydrogenase I subunit A</fullName>
    </alternativeName>
    <alternativeName>
        <fullName evidence="1">NDH-1 subunit A</fullName>
    </alternativeName>
    <alternativeName>
        <fullName evidence="1">NUO1</fullName>
    </alternativeName>
</protein>
<keyword id="KW-0997">Cell inner membrane</keyword>
<keyword id="KW-1003">Cell membrane</keyword>
<keyword id="KW-0472">Membrane</keyword>
<keyword id="KW-0520">NAD</keyword>
<keyword id="KW-0874">Quinone</keyword>
<keyword id="KW-1278">Translocase</keyword>
<keyword id="KW-0812">Transmembrane</keyword>
<keyword id="KW-1133">Transmembrane helix</keyword>
<keyword id="KW-0813">Transport</keyword>
<proteinExistence type="inferred from homology"/>
<comment type="function">
    <text evidence="1">NDH-1 shuttles electrons from NADH, via FMN and iron-sulfur (Fe-S) centers, to quinones in the respiratory chain. The immediate electron acceptor for the enzyme in this species is believed to be a menaquinone. Couples the redox reaction to proton translocation (for every two electrons transferred, four hydrogen ions are translocated across the cytoplasmic membrane), and thus conserves the redox energy in a proton gradient.</text>
</comment>
<comment type="catalytic activity">
    <reaction evidence="1">
        <text>a quinone + NADH + 5 H(+)(in) = a quinol + NAD(+) + 4 H(+)(out)</text>
        <dbReference type="Rhea" id="RHEA:57888"/>
        <dbReference type="ChEBI" id="CHEBI:15378"/>
        <dbReference type="ChEBI" id="CHEBI:24646"/>
        <dbReference type="ChEBI" id="CHEBI:57540"/>
        <dbReference type="ChEBI" id="CHEBI:57945"/>
        <dbReference type="ChEBI" id="CHEBI:132124"/>
    </reaction>
</comment>
<comment type="subunit">
    <text evidence="1">NDH-1 is composed of 14 different subunits. Subunits NuoA, H, J, K, L, M, N constitute the membrane sector of the complex.</text>
</comment>
<comment type="subcellular location">
    <subcellularLocation>
        <location evidence="1">Cell inner membrane</location>
        <topology evidence="1">Multi-pass membrane protein</topology>
    </subcellularLocation>
</comment>
<comment type="similarity">
    <text evidence="1">Belongs to the complex I subunit 3 family.</text>
</comment>
<accession>B3EKA1</accession>
<reference key="1">
    <citation type="submission" date="2008-06" db="EMBL/GenBank/DDBJ databases">
        <title>Complete sequence of Chlorobium phaeobacteroides BS1.</title>
        <authorList>
            <consortium name="US DOE Joint Genome Institute"/>
            <person name="Lucas S."/>
            <person name="Copeland A."/>
            <person name="Lapidus A."/>
            <person name="Glavina del Rio T."/>
            <person name="Dalin E."/>
            <person name="Tice H."/>
            <person name="Bruce D."/>
            <person name="Goodwin L."/>
            <person name="Pitluck S."/>
            <person name="Schmutz J."/>
            <person name="Larimer F."/>
            <person name="Land M."/>
            <person name="Hauser L."/>
            <person name="Kyrpides N."/>
            <person name="Ovchinnikova G."/>
            <person name="Li T."/>
            <person name="Liu Z."/>
            <person name="Zhao F."/>
            <person name="Overmann J."/>
            <person name="Bryant D.A."/>
            <person name="Richardson P."/>
        </authorList>
    </citation>
    <scope>NUCLEOTIDE SEQUENCE [LARGE SCALE GENOMIC DNA]</scope>
    <source>
        <strain>BS1</strain>
    </source>
</reference>
<feature type="chain" id="PRO_0000362657" description="NADH-quinone oxidoreductase subunit A">
    <location>
        <begin position="1"/>
        <end position="142"/>
    </location>
</feature>
<feature type="transmembrane region" description="Helical" evidence="1">
    <location>
        <begin position="8"/>
        <end position="28"/>
    </location>
</feature>
<feature type="transmembrane region" description="Helical" evidence="1">
    <location>
        <begin position="63"/>
        <end position="83"/>
    </location>
</feature>
<feature type="transmembrane region" description="Helical" evidence="1">
    <location>
        <begin position="93"/>
        <end position="113"/>
    </location>
</feature>
<organism>
    <name type="scientific">Chlorobium phaeobacteroides (strain BS1)</name>
    <dbReference type="NCBI Taxonomy" id="331678"/>
    <lineage>
        <taxon>Bacteria</taxon>
        <taxon>Pseudomonadati</taxon>
        <taxon>Chlorobiota</taxon>
        <taxon>Chlorobiia</taxon>
        <taxon>Chlorobiales</taxon>
        <taxon>Chlorobiaceae</taxon>
        <taxon>Chlorobium/Pelodictyon group</taxon>
        <taxon>Chlorobium</taxon>
    </lineage>
</organism>
<gene>
    <name evidence="1" type="primary">nuoA</name>
    <name type="ordered locus">Cphamn1_1607</name>
</gene>
<name>NUOA_CHLPB</name>
<sequence>MDQTLSDFGTVFVFLLLGIIFVVGGYLTARLLRPSRPNPEKLAIYECGEEAVGSAWVKFNIRFYVVALIFIIFDVEVVFLFPWATVFKQLGEFALIEALVFAGILVIGLVYAWVKGDLDWVRPTPNIPKMPVLEEDESQVVS</sequence>
<dbReference type="EC" id="7.1.1.-" evidence="1"/>
<dbReference type="EMBL" id="CP001101">
    <property type="protein sequence ID" value="ACE04528.1"/>
    <property type="molecule type" value="Genomic_DNA"/>
</dbReference>
<dbReference type="SMR" id="B3EKA1"/>
<dbReference type="STRING" id="331678.Cphamn1_1607"/>
<dbReference type="KEGG" id="cpb:Cphamn1_1607"/>
<dbReference type="eggNOG" id="COG0838">
    <property type="taxonomic scope" value="Bacteria"/>
</dbReference>
<dbReference type="HOGENOM" id="CLU_119549_1_0_10"/>
<dbReference type="OrthoDB" id="9791970at2"/>
<dbReference type="GO" id="GO:0030964">
    <property type="term" value="C:NADH dehydrogenase complex"/>
    <property type="evidence" value="ECO:0007669"/>
    <property type="project" value="TreeGrafter"/>
</dbReference>
<dbReference type="GO" id="GO:0005886">
    <property type="term" value="C:plasma membrane"/>
    <property type="evidence" value="ECO:0007669"/>
    <property type="project" value="UniProtKB-SubCell"/>
</dbReference>
<dbReference type="GO" id="GO:0008137">
    <property type="term" value="F:NADH dehydrogenase (ubiquinone) activity"/>
    <property type="evidence" value="ECO:0007669"/>
    <property type="project" value="InterPro"/>
</dbReference>
<dbReference type="GO" id="GO:0050136">
    <property type="term" value="F:NADH:ubiquinone reductase (non-electrogenic) activity"/>
    <property type="evidence" value="ECO:0007669"/>
    <property type="project" value="UniProtKB-UniRule"/>
</dbReference>
<dbReference type="GO" id="GO:0048038">
    <property type="term" value="F:quinone binding"/>
    <property type="evidence" value="ECO:0007669"/>
    <property type="project" value="UniProtKB-KW"/>
</dbReference>
<dbReference type="Gene3D" id="1.20.58.1610">
    <property type="entry name" value="NADH:ubiquinone/plastoquinone oxidoreductase, chain 3"/>
    <property type="match status" value="1"/>
</dbReference>
<dbReference type="HAMAP" id="MF_01394">
    <property type="entry name" value="NDH1_NuoA"/>
    <property type="match status" value="1"/>
</dbReference>
<dbReference type="InterPro" id="IPR023043">
    <property type="entry name" value="NAD(P)H_OxRDtase_bac/plastid"/>
</dbReference>
<dbReference type="InterPro" id="IPR000440">
    <property type="entry name" value="NADH_UbQ/plastoQ_OxRdtase_su3"/>
</dbReference>
<dbReference type="InterPro" id="IPR038430">
    <property type="entry name" value="NDAH_ubi_oxred_su3_sf"/>
</dbReference>
<dbReference type="PANTHER" id="PTHR11058">
    <property type="entry name" value="NADH-UBIQUINONE OXIDOREDUCTASE CHAIN 3"/>
    <property type="match status" value="1"/>
</dbReference>
<dbReference type="PANTHER" id="PTHR11058:SF9">
    <property type="entry name" value="NADH-UBIQUINONE OXIDOREDUCTASE CHAIN 3"/>
    <property type="match status" value="1"/>
</dbReference>
<dbReference type="Pfam" id="PF00507">
    <property type="entry name" value="Oxidored_q4"/>
    <property type="match status" value="1"/>
</dbReference>